<organism>
    <name type="scientific">Streptomyces griseus</name>
    <dbReference type="NCBI Taxonomy" id="1911"/>
    <lineage>
        <taxon>Bacteria</taxon>
        <taxon>Bacillati</taxon>
        <taxon>Actinomycetota</taxon>
        <taxon>Actinomycetes</taxon>
        <taxon>Kitasatosporales</taxon>
        <taxon>Streptomycetaceae</taxon>
        <taxon>Streptomyces</taxon>
    </lineage>
</organism>
<accession>P09398</accession>
<gene>
    <name type="primary">strG</name>
</gene>
<proteinExistence type="predicted"/>
<keyword id="KW-0045">Antibiotic biosynthesis</keyword>
<keyword id="KW-0759">Streptomycin biosynthesis</keyword>
<reference key="1">
    <citation type="journal article" date="1991" name="Mol. Gen. Genet.">
        <title>Genetics of streptomycin production in Streptomyces griseus: nucleotide sequence of five genes, strFGHIK, including a phosphatase gene.</title>
        <authorList>
            <person name="Mansouri K."/>
            <person name="Piepersberg W."/>
        </authorList>
    </citation>
    <scope>NUCLEOTIDE SEQUENCE [GENOMIC DNA]</scope>
    <source>
        <strain>N2-3-11</strain>
    </source>
</reference>
<sequence>MAKYTRLRYDVTEVPLADLVREVMGEEDLEGLAASDRVATRETDQSTPYHRRFYDNVDVISPVYRTLVHRLLGDEVDAVYIQRIPTFRVHLRNSVAVGSWHRDRDFGHDPSEVNYWVPLTRAYGNNTLWIDEEPVHAEYGEVIVFDGANSWHGNVVNDTETSRVSMDFRTLPRSSYEPNDRKSISYGLPFRLGEYWDTV</sequence>
<protein>
    <recommendedName>
        <fullName>Streptomycin biosynthesis protein StrG</fullName>
    </recommendedName>
</protein>
<comment type="function">
    <text>May be involved in the formation of N-methyl-L-glucosamine.</text>
</comment>
<comment type="pathway">
    <text>Antibiotic biosynthesis; streptomycin biosynthesis.</text>
</comment>
<name>STRG_STRGR</name>
<feature type="chain" id="PRO_0000072284" description="Streptomycin biosynthesis protein StrG">
    <location>
        <begin position="1"/>
        <end position="199"/>
    </location>
</feature>
<dbReference type="EMBL" id="Y00459">
    <property type="protein sequence ID" value="CAA68519.1"/>
    <property type="molecule type" value="Genomic_DNA"/>
</dbReference>
<dbReference type="PIR" id="S17777">
    <property type="entry name" value="S17777"/>
</dbReference>
<dbReference type="RefSeq" id="WP_003970242.1">
    <property type="nucleotide sequence ID" value="NZ_UAVD01000010.1"/>
</dbReference>
<dbReference type="SMR" id="P09398"/>
<dbReference type="OMA" id="YWVPLTR"/>
<dbReference type="OrthoDB" id="572320at2"/>
<dbReference type="UniPathway" id="UPA00066"/>
<dbReference type="GO" id="GO:0019872">
    <property type="term" value="P:streptomycin biosynthetic process"/>
    <property type="evidence" value="ECO:0007669"/>
    <property type="project" value="UniProtKB-UniPathway"/>
</dbReference>
<dbReference type="Gene3D" id="2.60.120.620">
    <property type="entry name" value="q2cbj1_9rhob like domain"/>
    <property type="match status" value="1"/>
</dbReference>
<dbReference type="SUPFAM" id="SSF51197">
    <property type="entry name" value="Clavaminate synthase-like"/>
    <property type="match status" value="1"/>
</dbReference>